<name>SYFA_CLOPS</name>
<feature type="chain" id="PRO_1000006819" description="Phenylalanine--tRNA ligase alpha subunit">
    <location>
        <begin position="1"/>
        <end position="339"/>
    </location>
</feature>
<feature type="binding site" evidence="1">
    <location>
        <position position="254"/>
    </location>
    <ligand>
        <name>Mg(2+)</name>
        <dbReference type="ChEBI" id="CHEBI:18420"/>
        <note>shared with beta subunit</note>
    </ligand>
</feature>
<gene>
    <name evidence="1" type="primary">pheS</name>
    <name type="ordered locus">CPR_1852</name>
</gene>
<accession>Q0SRU1</accession>
<protein>
    <recommendedName>
        <fullName evidence="1">Phenylalanine--tRNA ligase alpha subunit</fullName>
        <ecNumber evidence="1">6.1.1.20</ecNumber>
    </recommendedName>
    <alternativeName>
        <fullName evidence="1">Phenylalanyl-tRNA synthetase alpha subunit</fullName>
        <shortName evidence="1">PheRS</shortName>
    </alternativeName>
</protein>
<reference key="1">
    <citation type="journal article" date="2006" name="Genome Res.">
        <title>Skewed genomic variability in strains of the toxigenic bacterial pathogen, Clostridium perfringens.</title>
        <authorList>
            <person name="Myers G.S.A."/>
            <person name="Rasko D.A."/>
            <person name="Cheung J.K."/>
            <person name="Ravel J."/>
            <person name="Seshadri R."/>
            <person name="DeBoy R.T."/>
            <person name="Ren Q."/>
            <person name="Varga J."/>
            <person name="Awad M.M."/>
            <person name="Brinkac L.M."/>
            <person name="Daugherty S.C."/>
            <person name="Haft D.H."/>
            <person name="Dodson R.J."/>
            <person name="Madupu R."/>
            <person name="Nelson W.C."/>
            <person name="Rosovitz M.J."/>
            <person name="Sullivan S.A."/>
            <person name="Khouri H."/>
            <person name="Dimitrov G.I."/>
            <person name="Watkins K.L."/>
            <person name="Mulligan S."/>
            <person name="Benton J."/>
            <person name="Radune D."/>
            <person name="Fisher D.J."/>
            <person name="Atkins H.S."/>
            <person name="Hiscox T."/>
            <person name="Jost B.H."/>
            <person name="Billington S.J."/>
            <person name="Songer J.G."/>
            <person name="McClane B.A."/>
            <person name="Titball R.W."/>
            <person name="Rood J.I."/>
            <person name="Melville S.B."/>
            <person name="Paulsen I.T."/>
        </authorList>
    </citation>
    <scope>NUCLEOTIDE SEQUENCE [LARGE SCALE GENOMIC DNA]</scope>
    <source>
        <strain>SM101 / Type A</strain>
    </source>
</reference>
<organism>
    <name type="scientific">Clostridium perfringens (strain SM101 / Type A)</name>
    <dbReference type="NCBI Taxonomy" id="289380"/>
    <lineage>
        <taxon>Bacteria</taxon>
        <taxon>Bacillati</taxon>
        <taxon>Bacillota</taxon>
        <taxon>Clostridia</taxon>
        <taxon>Eubacteriales</taxon>
        <taxon>Clostridiaceae</taxon>
        <taxon>Clostridium</taxon>
    </lineage>
</organism>
<sequence>MQDKLNQIKELALVEIKKAKDSTTIDTIRVKYLGKKGELTTILRGMGSLSKEERPIVGKLANEVREVLEAELEAVTKAVKEAEKQEKLKNEVIDISMPGKKQTIGKKHPLEQTLDEMKKIFVSMGFAIEDGPEVEKDYYNFEALNIPKNHPARSEQDTFYINDNIVLRTQTSPVQARVMEKQQPPIKMISPGKVFRSDAVDATHSPIFYQMEGLVIDKDITFADLKGTLELFAKKMFGDKVKTKFRPHHFPFTEPSAEMDATCFVCNGKGCKVCKGEGWIEILGCGMVHPQVLRNCGIDPEVYSGFAFGFGVDRMVMLKYGIDDIRLLYESDMRFLNQF</sequence>
<comment type="catalytic activity">
    <reaction evidence="1">
        <text>tRNA(Phe) + L-phenylalanine + ATP = L-phenylalanyl-tRNA(Phe) + AMP + diphosphate + H(+)</text>
        <dbReference type="Rhea" id="RHEA:19413"/>
        <dbReference type="Rhea" id="RHEA-COMP:9668"/>
        <dbReference type="Rhea" id="RHEA-COMP:9699"/>
        <dbReference type="ChEBI" id="CHEBI:15378"/>
        <dbReference type="ChEBI" id="CHEBI:30616"/>
        <dbReference type="ChEBI" id="CHEBI:33019"/>
        <dbReference type="ChEBI" id="CHEBI:58095"/>
        <dbReference type="ChEBI" id="CHEBI:78442"/>
        <dbReference type="ChEBI" id="CHEBI:78531"/>
        <dbReference type="ChEBI" id="CHEBI:456215"/>
        <dbReference type="EC" id="6.1.1.20"/>
    </reaction>
</comment>
<comment type="cofactor">
    <cofactor evidence="1">
        <name>Mg(2+)</name>
        <dbReference type="ChEBI" id="CHEBI:18420"/>
    </cofactor>
    <text evidence="1">Binds 2 magnesium ions per tetramer.</text>
</comment>
<comment type="subunit">
    <text evidence="1">Tetramer of two alpha and two beta subunits.</text>
</comment>
<comment type="subcellular location">
    <subcellularLocation>
        <location evidence="1">Cytoplasm</location>
    </subcellularLocation>
</comment>
<comment type="similarity">
    <text evidence="1">Belongs to the class-II aminoacyl-tRNA synthetase family. Phe-tRNA synthetase alpha subunit type 1 subfamily.</text>
</comment>
<proteinExistence type="inferred from homology"/>
<keyword id="KW-0030">Aminoacyl-tRNA synthetase</keyword>
<keyword id="KW-0067">ATP-binding</keyword>
<keyword id="KW-0963">Cytoplasm</keyword>
<keyword id="KW-0436">Ligase</keyword>
<keyword id="KW-0460">Magnesium</keyword>
<keyword id="KW-0479">Metal-binding</keyword>
<keyword id="KW-0547">Nucleotide-binding</keyword>
<keyword id="KW-0648">Protein biosynthesis</keyword>
<dbReference type="EC" id="6.1.1.20" evidence="1"/>
<dbReference type="EMBL" id="CP000312">
    <property type="protein sequence ID" value="ABG87527.1"/>
    <property type="molecule type" value="Genomic_DNA"/>
</dbReference>
<dbReference type="RefSeq" id="WP_011592740.1">
    <property type="nucleotide sequence ID" value="NC_008262.1"/>
</dbReference>
<dbReference type="SMR" id="Q0SRU1"/>
<dbReference type="KEGG" id="cpr:CPR_1852"/>
<dbReference type="Proteomes" id="UP000001824">
    <property type="component" value="Chromosome"/>
</dbReference>
<dbReference type="GO" id="GO:0005737">
    <property type="term" value="C:cytoplasm"/>
    <property type="evidence" value="ECO:0007669"/>
    <property type="project" value="UniProtKB-SubCell"/>
</dbReference>
<dbReference type="GO" id="GO:0005524">
    <property type="term" value="F:ATP binding"/>
    <property type="evidence" value="ECO:0007669"/>
    <property type="project" value="UniProtKB-UniRule"/>
</dbReference>
<dbReference type="GO" id="GO:0140096">
    <property type="term" value="F:catalytic activity, acting on a protein"/>
    <property type="evidence" value="ECO:0007669"/>
    <property type="project" value="UniProtKB-ARBA"/>
</dbReference>
<dbReference type="GO" id="GO:0000287">
    <property type="term" value="F:magnesium ion binding"/>
    <property type="evidence" value="ECO:0007669"/>
    <property type="project" value="UniProtKB-UniRule"/>
</dbReference>
<dbReference type="GO" id="GO:0004826">
    <property type="term" value="F:phenylalanine-tRNA ligase activity"/>
    <property type="evidence" value="ECO:0007669"/>
    <property type="project" value="UniProtKB-UniRule"/>
</dbReference>
<dbReference type="GO" id="GO:0016740">
    <property type="term" value="F:transferase activity"/>
    <property type="evidence" value="ECO:0007669"/>
    <property type="project" value="UniProtKB-ARBA"/>
</dbReference>
<dbReference type="GO" id="GO:0000049">
    <property type="term" value="F:tRNA binding"/>
    <property type="evidence" value="ECO:0007669"/>
    <property type="project" value="InterPro"/>
</dbReference>
<dbReference type="GO" id="GO:0006432">
    <property type="term" value="P:phenylalanyl-tRNA aminoacylation"/>
    <property type="evidence" value="ECO:0007669"/>
    <property type="project" value="UniProtKB-UniRule"/>
</dbReference>
<dbReference type="CDD" id="cd00496">
    <property type="entry name" value="PheRS_alpha_core"/>
    <property type="match status" value="1"/>
</dbReference>
<dbReference type="FunFam" id="3.30.930.10:FF:000003">
    <property type="entry name" value="Phenylalanine--tRNA ligase alpha subunit"/>
    <property type="match status" value="1"/>
</dbReference>
<dbReference type="Gene3D" id="3.30.930.10">
    <property type="entry name" value="Bira Bifunctional Protein, Domain 2"/>
    <property type="match status" value="1"/>
</dbReference>
<dbReference type="HAMAP" id="MF_00281">
    <property type="entry name" value="Phe_tRNA_synth_alpha1"/>
    <property type="match status" value="1"/>
</dbReference>
<dbReference type="InterPro" id="IPR006195">
    <property type="entry name" value="aa-tRNA-synth_II"/>
</dbReference>
<dbReference type="InterPro" id="IPR045864">
    <property type="entry name" value="aa-tRNA-synth_II/BPL/LPL"/>
</dbReference>
<dbReference type="InterPro" id="IPR004529">
    <property type="entry name" value="Phe-tRNA-synth_IIc_asu"/>
</dbReference>
<dbReference type="InterPro" id="IPR004188">
    <property type="entry name" value="Phe-tRNA_ligase_II_N"/>
</dbReference>
<dbReference type="InterPro" id="IPR022911">
    <property type="entry name" value="Phe_tRNA_ligase_alpha1_bac"/>
</dbReference>
<dbReference type="InterPro" id="IPR002319">
    <property type="entry name" value="Phenylalanyl-tRNA_Synthase"/>
</dbReference>
<dbReference type="InterPro" id="IPR010978">
    <property type="entry name" value="tRNA-bd_arm"/>
</dbReference>
<dbReference type="NCBIfam" id="TIGR00468">
    <property type="entry name" value="pheS"/>
    <property type="match status" value="1"/>
</dbReference>
<dbReference type="PANTHER" id="PTHR11538:SF41">
    <property type="entry name" value="PHENYLALANINE--TRNA LIGASE, MITOCHONDRIAL"/>
    <property type="match status" value="1"/>
</dbReference>
<dbReference type="PANTHER" id="PTHR11538">
    <property type="entry name" value="PHENYLALANYL-TRNA SYNTHETASE"/>
    <property type="match status" value="1"/>
</dbReference>
<dbReference type="Pfam" id="PF02912">
    <property type="entry name" value="Phe_tRNA-synt_N"/>
    <property type="match status" value="1"/>
</dbReference>
<dbReference type="Pfam" id="PF01409">
    <property type="entry name" value="tRNA-synt_2d"/>
    <property type="match status" value="1"/>
</dbReference>
<dbReference type="SUPFAM" id="SSF55681">
    <property type="entry name" value="Class II aaRS and biotin synthetases"/>
    <property type="match status" value="1"/>
</dbReference>
<dbReference type="SUPFAM" id="SSF46589">
    <property type="entry name" value="tRNA-binding arm"/>
    <property type="match status" value="1"/>
</dbReference>
<dbReference type="PROSITE" id="PS50862">
    <property type="entry name" value="AA_TRNA_LIGASE_II"/>
    <property type="match status" value="1"/>
</dbReference>
<evidence type="ECO:0000255" key="1">
    <source>
        <dbReference type="HAMAP-Rule" id="MF_00281"/>
    </source>
</evidence>